<sequence length="367" mass="39481">MSNPSLLILPGDGIGPEVMAEVRKIIGWFGDKRGLNFDVSEDLVGGAAYDVHGVPLADETMAKAQEADAVLLGAVGGPKYDDLDFSVKPERGLLRLRKEMDLFSNLRPAQCFDALADFSSLKKDIVAGLDIMIVRELTSGVYFGEPRGIFEEGNERVGINTQRYTESEIERVARSAFELAMRRSKKLCSMEKANVMESGILWREVVTRVAKDYPEVELSHMYADNGAMQLVRAPKQFDVILTDNLFGDILSDCAAMLTGSLGMLPSASLGAPMANGRPKALYEPVHGSAPDIAGQGKANPIACILSFAMALRYSFDQGAEADRLEAAVEQVLADGVRTADLLGTEGVTPVSTTEMGAAILAKLDASL</sequence>
<feature type="chain" id="PRO_0000083749" description="3-isopropylmalate dehydrogenase">
    <location>
        <begin position="1"/>
        <end position="367"/>
    </location>
</feature>
<feature type="binding site" evidence="1">
    <location>
        <begin position="77"/>
        <end position="90"/>
    </location>
    <ligand>
        <name>NAD(+)</name>
        <dbReference type="ChEBI" id="CHEBI:57540"/>
    </ligand>
</feature>
<feature type="binding site" evidence="1">
    <location>
        <position position="97"/>
    </location>
    <ligand>
        <name>substrate</name>
    </ligand>
</feature>
<feature type="binding site" evidence="1">
    <location>
        <position position="107"/>
    </location>
    <ligand>
        <name>substrate</name>
    </ligand>
</feature>
<feature type="binding site" evidence="1">
    <location>
        <position position="135"/>
    </location>
    <ligand>
        <name>substrate</name>
    </ligand>
</feature>
<feature type="binding site" evidence="1">
    <location>
        <position position="224"/>
    </location>
    <ligand>
        <name>Mg(2+)</name>
        <dbReference type="ChEBI" id="CHEBI:18420"/>
    </ligand>
</feature>
<feature type="binding site" evidence="1">
    <location>
        <position position="224"/>
    </location>
    <ligand>
        <name>substrate</name>
    </ligand>
</feature>
<feature type="binding site" evidence="1">
    <location>
        <position position="248"/>
    </location>
    <ligand>
        <name>Mg(2+)</name>
        <dbReference type="ChEBI" id="CHEBI:18420"/>
    </ligand>
</feature>
<feature type="binding site" evidence="1">
    <location>
        <position position="252"/>
    </location>
    <ligand>
        <name>Mg(2+)</name>
        <dbReference type="ChEBI" id="CHEBI:18420"/>
    </ligand>
</feature>
<feature type="binding site" evidence="1">
    <location>
        <begin position="287"/>
        <end position="299"/>
    </location>
    <ligand>
        <name>NAD(+)</name>
        <dbReference type="ChEBI" id="CHEBI:57540"/>
    </ligand>
</feature>
<feature type="site" description="Important for catalysis" evidence="1">
    <location>
        <position position="142"/>
    </location>
</feature>
<feature type="site" description="Important for catalysis" evidence="1">
    <location>
        <position position="192"/>
    </location>
</feature>
<evidence type="ECO:0000255" key="1">
    <source>
        <dbReference type="HAMAP-Rule" id="MF_01033"/>
    </source>
</evidence>
<proteinExistence type="inferred from homology"/>
<gene>
    <name evidence="1" type="primary">leuB</name>
    <name type="ordered locus">SPO0210</name>
</gene>
<name>LEU3_RUEPO</name>
<organism>
    <name type="scientific">Ruegeria pomeroyi (strain ATCC 700808 / DSM 15171 / DSS-3)</name>
    <name type="common">Silicibacter pomeroyi</name>
    <dbReference type="NCBI Taxonomy" id="246200"/>
    <lineage>
        <taxon>Bacteria</taxon>
        <taxon>Pseudomonadati</taxon>
        <taxon>Pseudomonadota</taxon>
        <taxon>Alphaproteobacteria</taxon>
        <taxon>Rhodobacterales</taxon>
        <taxon>Roseobacteraceae</taxon>
        <taxon>Ruegeria</taxon>
    </lineage>
</organism>
<accession>Q5LWZ5</accession>
<reference key="1">
    <citation type="journal article" date="2004" name="Nature">
        <title>Genome sequence of Silicibacter pomeroyi reveals adaptations to the marine environment.</title>
        <authorList>
            <person name="Moran M.A."/>
            <person name="Buchan A."/>
            <person name="Gonzalez J.M."/>
            <person name="Heidelberg J.F."/>
            <person name="Whitman W.B."/>
            <person name="Kiene R.P."/>
            <person name="Henriksen J.R."/>
            <person name="King G.M."/>
            <person name="Belas R."/>
            <person name="Fuqua C."/>
            <person name="Brinkac L.M."/>
            <person name="Lewis M."/>
            <person name="Johri S."/>
            <person name="Weaver B."/>
            <person name="Pai G."/>
            <person name="Eisen J.A."/>
            <person name="Rahe E."/>
            <person name="Sheldon W.M."/>
            <person name="Ye W."/>
            <person name="Miller T.R."/>
            <person name="Carlton J."/>
            <person name="Rasko D.A."/>
            <person name="Paulsen I.T."/>
            <person name="Ren Q."/>
            <person name="Daugherty S.C."/>
            <person name="DeBoy R.T."/>
            <person name="Dodson R.J."/>
            <person name="Durkin A.S."/>
            <person name="Madupu R."/>
            <person name="Nelson W.C."/>
            <person name="Sullivan S.A."/>
            <person name="Rosovitz M.J."/>
            <person name="Haft D.H."/>
            <person name="Selengut J."/>
            <person name="Ward N."/>
        </authorList>
    </citation>
    <scope>NUCLEOTIDE SEQUENCE [LARGE SCALE GENOMIC DNA]</scope>
    <source>
        <strain>ATCC 700808 / DSM 15171 / DSS-3</strain>
    </source>
</reference>
<reference key="2">
    <citation type="journal article" date="2014" name="Stand. Genomic Sci.">
        <title>An updated genome annotation for the model marine bacterium Ruegeria pomeroyi DSS-3.</title>
        <authorList>
            <person name="Rivers A.R."/>
            <person name="Smith C.B."/>
            <person name="Moran M.A."/>
        </authorList>
    </citation>
    <scope>GENOME REANNOTATION</scope>
    <source>
        <strain>ATCC 700808 / DSM 15171 / DSS-3</strain>
    </source>
</reference>
<comment type="function">
    <text evidence="1">Catalyzes the oxidation of 3-carboxy-2-hydroxy-4-methylpentanoate (3-isopropylmalate) to 3-carboxy-4-methyl-2-oxopentanoate. The product decarboxylates to 4-methyl-2 oxopentanoate.</text>
</comment>
<comment type="catalytic activity">
    <reaction evidence="1">
        <text>(2R,3S)-3-isopropylmalate + NAD(+) = 4-methyl-2-oxopentanoate + CO2 + NADH</text>
        <dbReference type="Rhea" id="RHEA:32271"/>
        <dbReference type="ChEBI" id="CHEBI:16526"/>
        <dbReference type="ChEBI" id="CHEBI:17865"/>
        <dbReference type="ChEBI" id="CHEBI:35121"/>
        <dbReference type="ChEBI" id="CHEBI:57540"/>
        <dbReference type="ChEBI" id="CHEBI:57945"/>
        <dbReference type="EC" id="1.1.1.85"/>
    </reaction>
</comment>
<comment type="cofactor">
    <cofactor evidence="1">
        <name>Mg(2+)</name>
        <dbReference type="ChEBI" id="CHEBI:18420"/>
    </cofactor>
    <cofactor evidence="1">
        <name>Mn(2+)</name>
        <dbReference type="ChEBI" id="CHEBI:29035"/>
    </cofactor>
    <text evidence="1">Binds 1 Mg(2+) or Mn(2+) ion per subunit.</text>
</comment>
<comment type="pathway">
    <text evidence="1">Amino-acid biosynthesis; L-leucine biosynthesis; L-leucine from 3-methyl-2-oxobutanoate: step 3/4.</text>
</comment>
<comment type="subunit">
    <text evidence="1">Homodimer.</text>
</comment>
<comment type="subcellular location">
    <subcellularLocation>
        <location evidence="1">Cytoplasm</location>
    </subcellularLocation>
</comment>
<comment type="similarity">
    <text evidence="1">Belongs to the isocitrate and isopropylmalate dehydrogenases family. LeuB type 1 subfamily.</text>
</comment>
<dbReference type="EC" id="1.1.1.85" evidence="1"/>
<dbReference type="EMBL" id="CP000031">
    <property type="protein sequence ID" value="AAV93535.1"/>
    <property type="molecule type" value="Genomic_DNA"/>
</dbReference>
<dbReference type="RefSeq" id="WP_011045978.1">
    <property type="nucleotide sequence ID" value="NC_003911.12"/>
</dbReference>
<dbReference type="SMR" id="Q5LWZ5"/>
<dbReference type="STRING" id="246200.SPO0210"/>
<dbReference type="PaxDb" id="246200-SPO0210"/>
<dbReference type="KEGG" id="sil:SPO0210"/>
<dbReference type="eggNOG" id="COG0473">
    <property type="taxonomic scope" value="Bacteria"/>
</dbReference>
<dbReference type="HOGENOM" id="CLU_031953_0_3_5"/>
<dbReference type="OrthoDB" id="9767905at2"/>
<dbReference type="UniPathway" id="UPA00048">
    <property type="reaction ID" value="UER00072"/>
</dbReference>
<dbReference type="Proteomes" id="UP000001023">
    <property type="component" value="Chromosome"/>
</dbReference>
<dbReference type="GO" id="GO:0005829">
    <property type="term" value="C:cytosol"/>
    <property type="evidence" value="ECO:0007669"/>
    <property type="project" value="TreeGrafter"/>
</dbReference>
<dbReference type="GO" id="GO:0003862">
    <property type="term" value="F:3-isopropylmalate dehydrogenase activity"/>
    <property type="evidence" value="ECO:0007669"/>
    <property type="project" value="UniProtKB-UniRule"/>
</dbReference>
<dbReference type="GO" id="GO:0000287">
    <property type="term" value="F:magnesium ion binding"/>
    <property type="evidence" value="ECO:0007669"/>
    <property type="project" value="InterPro"/>
</dbReference>
<dbReference type="GO" id="GO:0051287">
    <property type="term" value="F:NAD binding"/>
    <property type="evidence" value="ECO:0007669"/>
    <property type="project" value="InterPro"/>
</dbReference>
<dbReference type="GO" id="GO:0009098">
    <property type="term" value="P:L-leucine biosynthetic process"/>
    <property type="evidence" value="ECO:0007669"/>
    <property type="project" value="UniProtKB-UniRule"/>
</dbReference>
<dbReference type="FunFam" id="3.40.718.10:FF:000006">
    <property type="entry name" value="3-isopropylmalate dehydrogenase"/>
    <property type="match status" value="1"/>
</dbReference>
<dbReference type="Gene3D" id="3.40.718.10">
    <property type="entry name" value="Isopropylmalate Dehydrogenase"/>
    <property type="match status" value="1"/>
</dbReference>
<dbReference type="HAMAP" id="MF_01033">
    <property type="entry name" value="LeuB_type1"/>
    <property type="match status" value="1"/>
</dbReference>
<dbReference type="InterPro" id="IPR019818">
    <property type="entry name" value="IsoCit/isopropylmalate_DH_CS"/>
</dbReference>
<dbReference type="InterPro" id="IPR024084">
    <property type="entry name" value="IsoPropMal-DH-like_dom"/>
</dbReference>
<dbReference type="InterPro" id="IPR004429">
    <property type="entry name" value="Isopropylmalate_DH"/>
</dbReference>
<dbReference type="NCBIfam" id="TIGR00169">
    <property type="entry name" value="leuB"/>
    <property type="match status" value="1"/>
</dbReference>
<dbReference type="PANTHER" id="PTHR42979">
    <property type="entry name" value="3-ISOPROPYLMALATE DEHYDROGENASE"/>
    <property type="match status" value="1"/>
</dbReference>
<dbReference type="PANTHER" id="PTHR42979:SF1">
    <property type="entry name" value="3-ISOPROPYLMALATE DEHYDROGENASE"/>
    <property type="match status" value="1"/>
</dbReference>
<dbReference type="Pfam" id="PF00180">
    <property type="entry name" value="Iso_dh"/>
    <property type="match status" value="1"/>
</dbReference>
<dbReference type="SMART" id="SM01329">
    <property type="entry name" value="Iso_dh"/>
    <property type="match status" value="1"/>
</dbReference>
<dbReference type="SUPFAM" id="SSF53659">
    <property type="entry name" value="Isocitrate/Isopropylmalate dehydrogenase-like"/>
    <property type="match status" value="1"/>
</dbReference>
<dbReference type="PROSITE" id="PS00470">
    <property type="entry name" value="IDH_IMDH"/>
    <property type="match status" value="1"/>
</dbReference>
<keyword id="KW-0028">Amino-acid biosynthesis</keyword>
<keyword id="KW-0100">Branched-chain amino acid biosynthesis</keyword>
<keyword id="KW-0963">Cytoplasm</keyword>
<keyword id="KW-0432">Leucine biosynthesis</keyword>
<keyword id="KW-0460">Magnesium</keyword>
<keyword id="KW-0464">Manganese</keyword>
<keyword id="KW-0479">Metal-binding</keyword>
<keyword id="KW-0520">NAD</keyword>
<keyword id="KW-0560">Oxidoreductase</keyword>
<keyword id="KW-1185">Reference proteome</keyword>
<protein>
    <recommendedName>
        <fullName evidence="1">3-isopropylmalate dehydrogenase</fullName>
        <ecNumber evidence="1">1.1.1.85</ecNumber>
    </recommendedName>
    <alternativeName>
        <fullName evidence="1">3-IPM-DH</fullName>
    </alternativeName>
    <alternativeName>
        <fullName evidence="1">Beta-IPM dehydrogenase</fullName>
        <shortName evidence="1">IMDH</shortName>
    </alternativeName>
</protein>